<organism>
    <name type="scientific">Rhodopseudomonas palustris (strain HaA2)</name>
    <dbReference type="NCBI Taxonomy" id="316058"/>
    <lineage>
        <taxon>Bacteria</taxon>
        <taxon>Pseudomonadati</taxon>
        <taxon>Pseudomonadota</taxon>
        <taxon>Alphaproteobacteria</taxon>
        <taxon>Hyphomicrobiales</taxon>
        <taxon>Nitrobacteraceae</taxon>
        <taxon>Rhodopseudomonas</taxon>
    </lineage>
</organism>
<gene>
    <name evidence="1" type="primary">dapF</name>
    <name type="ordered locus">RPB_0359</name>
</gene>
<comment type="function">
    <text evidence="1">Catalyzes the stereoinversion of LL-2,6-diaminopimelate (L,L-DAP) to meso-diaminopimelate (meso-DAP), a precursor of L-lysine and an essential component of the bacterial peptidoglycan.</text>
</comment>
<comment type="catalytic activity">
    <reaction evidence="1">
        <text>(2S,6S)-2,6-diaminopimelate = meso-2,6-diaminopimelate</text>
        <dbReference type="Rhea" id="RHEA:15393"/>
        <dbReference type="ChEBI" id="CHEBI:57609"/>
        <dbReference type="ChEBI" id="CHEBI:57791"/>
        <dbReference type="EC" id="5.1.1.7"/>
    </reaction>
</comment>
<comment type="pathway">
    <text evidence="1">Amino-acid biosynthesis; L-lysine biosynthesis via DAP pathway; DL-2,6-diaminopimelate from LL-2,6-diaminopimelate: step 1/1.</text>
</comment>
<comment type="subunit">
    <text evidence="1">Homodimer.</text>
</comment>
<comment type="subcellular location">
    <subcellularLocation>
        <location evidence="1">Cytoplasm</location>
    </subcellularLocation>
</comment>
<comment type="similarity">
    <text evidence="1">Belongs to the diaminopimelate epimerase family.</text>
</comment>
<evidence type="ECO:0000255" key="1">
    <source>
        <dbReference type="HAMAP-Rule" id="MF_00197"/>
    </source>
</evidence>
<name>DAPF_RHOP2</name>
<reference key="1">
    <citation type="submission" date="2006-01" db="EMBL/GenBank/DDBJ databases">
        <title>Complete sequence of Rhodopseudomonas palustris HaA2.</title>
        <authorList>
            <consortium name="US DOE Joint Genome Institute"/>
            <person name="Copeland A."/>
            <person name="Lucas S."/>
            <person name="Lapidus A."/>
            <person name="Barry K."/>
            <person name="Detter J.C."/>
            <person name="Glavina T."/>
            <person name="Hammon N."/>
            <person name="Israni S."/>
            <person name="Pitluck S."/>
            <person name="Chain P."/>
            <person name="Malfatti S."/>
            <person name="Shin M."/>
            <person name="Vergez L."/>
            <person name="Schmutz J."/>
            <person name="Larimer F."/>
            <person name="Land M."/>
            <person name="Hauser L."/>
            <person name="Pelletier D.A."/>
            <person name="Kyrpides N."/>
            <person name="Anderson I."/>
            <person name="Oda Y."/>
            <person name="Harwood C.S."/>
            <person name="Richardson P."/>
        </authorList>
    </citation>
    <scope>NUCLEOTIDE SEQUENCE [LARGE SCALE GENOMIC DNA]</scope>
    <source>
        <strain>HaA2</strain>
    </source>
</reference>
<protein>
    <recommendedName>
        <fullName evidence="1">Diaminopimelate epimerase</fullName>
        <shortName evidence="1">DAP epimerase</shortName>
        <ecNumber evidence="1">5.1.1.7</ecNumber>
    </recommendedName>
    <alternativeName>
        <fullName evidence="1">PLP-independent amino acid racemase</fullName>
    </alternativeName>
</protein>
<accession>Q2J390</accession>
<sequence>MSALDNRLFAKMNGIGNEIVVVDLRDQPAPVTPDDARAVAAHVPYDQLMLLQPARLPGTEAFVRIYNNDGSESGACGNGMRCVARQLFAGSDQQGLTFETRAGLLNCWRGPAEGLFTVDMGAPKFGWQDIPLAEEFRDTRGIELQIGPIDAPILHTPSVVSMGNPHAIFWVDDIHAYDLGQFGPLLENHPIFPERANITLAHIVDRQHITMRTWERGAGLTRACGSAACATAVAAARLRRTDRIVEMTLPGGKLTIEWREGDDHVLMTGGAELEFEGRFDPALFVGACDTTAA</sequence>
<keyword id="KW-0028">Amino-acid biosynthesis</keyword>
<keyword id="KW-0963">Cytoplasm</keyword>
<keyword id="KW-0413">Isomerase</keyword>
<keyword id="KW-0457">Lysine biosynthesis</keyword>
<keyword id="KW-1185">Reference proteome</keyword>
<proteinExistence type="inferred from homology"/>
<dbReference type="EC" id="5.1.1.7" evidence="1"/>
<dbReference type="EMBL" id="CP000250">
    <property type="protein sequence ID" value="ABD05070.1"/>
    <property type="molecule type" value="Genomic_DNA"/>
</dbReference>
<dbReference type="RefSeq" id="WP_011439260.1">
    <property type="nucleotide sequence ID" value="NC_007778.1"/>
</dbReference>
<dbReference type="SMR" id="Q2J390"/>
<dbReference type="STRING" id="316058.RPB_0359"/>
<dbReference type="KEGG" id="rpb:RPB_0359"/>
<dbReference type="eggNOG" id="COG0253">
    <property type="taxonomic scope" value="Bacteria"/>
</dbReference>
<dbReference type="HOGENOM" id="CLU_053306_1_0_5"/>
<dbReference type="OrthoDB" id="9805408at2"/>
<dbReference type="UniPathway" id="UPA00034">
    <property type="reaction ID" value="UER00025"/>
</dbReference>
<dbReference type="Proteomes" id="UP000008809">
    <property type="component" value="Chromosome"/>
</dbReference>
<dbReference type="GO" id="GO:0005829">
    <property type="term" value="C:cytosol"/>
    <property type="evidence" value="ECO:0007669"/>
    <property type="project" value="TreeGrafter"/>
</dbReference>
<dbReference type="GO" id="GO:0008837">
    <property type="term" value="F:diaminopimelate epimerase activity"/>
    <property type="evidence" value="ECO:0007669"/>
    <property type="project" value="UniProtKB-UniRule"/>
</dbReference>
<dbReference type="GO" id="GO:0009089">
    <property type="term" value="P:lysine biosynthetic process via diaminopimelate"/>
    <property type="evidence" value="ECO:0007669"/>
    <property type="project" value="UniProtKB-UniRule"/>
</dbReference>
<dbReference type="FunFam" id="3.10.310.10:FF:000004">
    <property type="entry name" value="Diaminopimelate epimerase"/>
    <property type="match status" value="1"/>
</dbReference>
<dbReference type="Gene3D" id="3.10.310.10">
    <property type="entry name" value="Diaminopimelate Epimerase, Chain A, domain 1"/>
    <property type="match status" value="2"/>
</dbReference>
<dbReference type="HAMAP" id="MF_00197">
    <property type="entry name" value="DAP_epimerase"/>
    <property type="match status" value="1"/>
</dbReference>
<dbReference type="InterPro" id="IPR018510">
    <property type="entry name" value="DAP_epimerase_AS"/>
</dbReference>
<dbReference type="InterPro" id="IPR001653">
    <property type="entry name" value="DAP_epimerase_DapF"/>
</dbReference>
<dbReference type="NCBIfam" id="TIGR00652">
    <property type="entry name" value="DapF"/>
    <property type="match status" value="1"/>
</dbReference>
<dbReference type="PANTHER" id="PTHR31689:SF0">
    <property type="entry name" value="DIAMINOPIMELATE EPIMERASE"/>
    <property type="match status" value="1"/>
</dbReference>
<dbReference type="PANTHER" id="PTHR31689">
    <property type="entry name" value="DIAMINOPIMELATE EPIMERASE, CHLOROPLASTIC"/>
    <property type="match status" value="1"/>
</dbReference>
<dbReference type="Pfam" id="PF01678">
    <property type="entry name" value="DAP_epimerase"/>
    <property type="match status" value="2"/>
</dbReference>
<dbReference type="SUPFAM" id="SSF54506">
    <property type="entry name" value="Diaminopimelate epimerase-like"/>
    <property type="match status" value="2"/>
</dbReference>
<dbReference type="PROSITE" id="PS01326">
    <property type="entry name" value="DAP_EPIMERASE"/>
    <property type="match status" value="1"/>
</dbReference>
<feature type="chain" id="PRO_1000011946" description="Diaminopimelate epimerase">
    <location>
        <begin position="1"/>
        <end position="293"/>
    </location>
</feature>
<feature type="active site" description="Proton donor" evidence="1">
    <location>
        <position position="76"/>
    </location>
</feature>
<feature type="active site" description="Proton acceptor" evidence="1">
    <location>
        <position position="224"/>
    </location>
</feature>
<feature type="binding site" evidence="1">
    <location>
        <position position="17"/>
    </location>
    <ligand>
        <name>substrate</name>
    </ligand>
</feature>
<feature type="binding site" evidence="1">
    <location>
        <position position="47"/>
    </location>
    <ligand>
        <name>substrate</name>
    </ligand>
</feature>
<feature type="binding site" evidence="1">
    <location>
        <position position="67"/>
    </location>
    <ligand>
        <name>substrate</name>
    </ligand>
</feature>
<feature type="binding site" evidence="1">
    <location>
        <begin position="77"/>
        <end position="78"/>
    </location>
    <ligand>
        <name>substrate</name>
    </ligand>
</feature>
<feature type="binding site" evidence="1">
    <location>
        <position position="164"/>
    </location>
    <ligand>
        <name>substrate</name>
    </ligand>
</feature>
<feature type="binding site" evidence="1">
    <location>
        <position position="197"/>
    </location>
    <ligand>
        <name>substrate</name>
    </ligand>
</feature>
<feature type="binding site" evidence="1">
    <location>
        <begin position="215"/>
        <end position="216"/>
    </location>
    <ligand>
        <name>substrate</name>
    </ligand>
</feature>
<feature type="binding site" evidence="1">
    <location>
        <begin position="225"/>
        <end position="226"/>
    </location>
    <ligand>
        <name>substrate</name>
    </ligand>
</feature>
<feature type="site" description="Could be important to modulate the pK values of the two catalytic cysteine residues" evidence="1">
    <location>
        <position position="166"/>
    </location>
</feature>
<feature type="site" description="Could be important to modulate the pK values of the two catalytic cysteine residues" evidence="1">
    <location>
        <position position="215"/>
    </location>
</feature>